<accession>Q6GIN3</accession>
<dbReference type="EMBL" id="BX571856">
    <property type="protein sequence ID" value="CAG39822.1"/>
    <property type="molecule type" value="Genomic_DNA"/>
</dbReference>
<dbReference type="SMR" id="Q6GIN3"/>
<dbReference type="KEGG" id="sar:SAR0812"/>
<dbReference type="HOGENOM" id="CLU_009621_2_1_9"/>
<dbReference type="Proteomes" id="UP000000596">
    <property type="component" value="Chromosome"/>
</dbReference>
<dbReference type="GO" id="GO:0005737">
    <property type="term" value="C:cytoplasm"/>
    <property type="evidence" value="ECO:0007669"/>
    <property type="project" value="UniProtKB-SubCell"/>
</dbReference>
<dbReference type="GO" id="GO:0009380">
    <property type="term" value="C:excinuclease repair complex"/>
    <property type="evidence" value="ECO:0007669"/>
    <property type="project" value="InterPro"/>
</dbReference>
<dbReference type="GO" id="GO:0005524">
    <property type="term" value="F:ATP binding"/>
    <property type="evidence" value="ECO:0007669"/>
    <property type="project" value="UniProtKB-UniRule"/>
</dbReference>
<dbReference type="GO" id="GO:0016887">
    <property type="term" value="F:ATP hydrolysis activity"/>
    <property type="evidence" value="ECO:0007669"/>
    <property type="project" value="InterPro"/>
</dbReference>
<dbReference type="GO" id="GO:0003677">
    <property type="term" value="F:DNA binding"/>
    <property type="evidence" value="ECO:0007669"/>
    <property type="project" value="UniProtKB-UniRule"/>
</dbReference>
<dbReference type="GO" id="GO:0009381">
    <property type="term" value="F:excinuclease ABC activity"/>
    <property type="evidence" value="ECO:0007669"/>
    <property type="project" value="UniProtKB-UniRule"/>
</dbReference>
<dbReference type="GO" id="GO:0006289">
    <property type="term" value="P:nucleotide-excision repair"/>
    <property type="evidence" value="ECO:0007669"/>
    <property type="project" value="UniProtKB-UniRule"/>
</dbReference>
<dbReference type="GO" id="GO:0009432">
    <property type="term" value="P:SOS response"/>
    <property type="evidence" value="ECO:0007669"/>
    <property type="project" value="UniProtKB-UniRule"/>
</dbReference>
<dbReference type="CDD" id="cd17916">
    <property type="entry name" value="DEXHc_UvrB"/>
    <property type="match status" value="1"/>
</dbReference>
<dbReference type="CDD" id="cd18790">
    <property type="entry name" value="SF2_C_UvrB"/>
    <property type="match status" value="1"/>
</dbReference>
<dbReference type="Gene3D" id="3.40.50.300">
    <property type="entry name" value="P-loop containing nucleotide triphosphate hydrolases"/>
    <property type="match status" value="3"/>
</dbReference>
<dbReference type="Gene3D" id="4.10.860.10">
    <property type="entry name" value="UVR domain"/>
    <property type="match status" value="1"/>
</dbReference>
<dbReference type="HAMAP" id="MF_00204">
    <property type="entry name" value="UvrB"/>
    <property type="match status" value="1"/>
</dbReference>
<dbReference type="InterPro" id="IPR006935">
    <property type="entry name" value="Helicase/UvrB_N"/>
</dbReference>
<dbReference type="InterPro" id="IPR014001">
    <property type="entry name" value="Helicase_ATP-bd"/>
</dbReference>
<dbReference type="InterPro" id="IPR001650">
    <property type="entry name" value="Helicase_C-like"/>
</dbReference>
<dbReference type="InterPro" id="IPR027417">
    <property type="entry name" value="P-loop_NTPase"/>
</dbReference>
<dbReference type="InterPro" id="IPR001943">
    <property type="entry name" value="UVR_dom"/>
</dbReference>
<dbReference type="InterPro" id="IPR036876">
    <property type="entry name" value="UVR_dom_sf"/>
</dbReference>
<dbReference type="InterPro" id="IPR004807">
    <property type="entry name" value="UvrB"/>
</dbReference>
<dbReference type="InterPro" id="IPR041471">
    <property type="entry name" value="UvrB_inter"/>
</dbReference>
<dbReference type="InterPro" id="IPR024759">
    <property type="entry name" value="UvrB_YAD/RRR_dom"/>
</dbReference>
<dbReference type="NCBIfam" id="NF003673">
    <property type="entry name" value="PRK05298.1"/>
    <property type="match status" value="1"/>
</dbReference>
<dbReference type="NCBIfam" id="TIGR00631">
    <property type="entry name" value="uvrb"/>
    <property type="match status" value="1"/>
</dbReference>
<dbReference type="PANTHER" id="PTHR24029">
    <property type="entry name" value="UVRABC SYSTEM PROTEIN B"/>
    <property type="match status" value="1"/>
</dbReference>
<dbReference type="PANTHER" id="PTHR24029:SF0">
    <property type="entry name" value="UVRABC SYSTEM PROTEIN B"/>
    <property type="match status" value="1"/>
</dbReference>
<dbReference type="Pfam" id="PF00271">
    <property type="entry name" value="Helicase_C"/>
    <property type="match status" value="1"/>
</dbReference>
<dbReference type="Pfam" id="PF04851">
    <property type="entry name" value="ResIII"/>
    <property type="match status" value="1"/>
</dbReference>
<dbReference type="Pfam" id="PF02151">
    <property type="entry name" value="UVR"/>
    <property type="match status" value="1"/>
</dbReference>
<dbReference type="Pfam" id="PF12344">
    <property type="entry name" value="UvrB"/>
    <property type="match status" value="1"/>
</dbReference>
<dbReference type="Pfam" id="PF17757">
    <property type="entry name" value="UvrB_inter"/>
    <property type="match status" value="1"/>
</dbReference>
<dbReference type="SMART" id="SM00487">
    <property type="entry name" value="DEXDc"/>
    <property type="match status" value="1"/>
</dbReference>
<dbReference type="SMART" id="SM00490">
    <property type="entry name" value="HELICc"/>
    <property type="match status" value="1"/>
</dbReference>
<dbReference type="SUPFAM" id="SSF46600">
    <property type="entry name" value="C-terminal UvrC-binding domain of UvrB"/>
    <property type="match status" value="1"/>
</dbReference>
<dbReference type="SUPFAM" id="SSF52540">
    <property type="entry name" value="P-loop containing nucleoside triphosphate hydrolases"/>
    <property type="match status" value="2"/>
</dbReference>
<dbReference type="PROSITE" id="PS51192">
    <property type="entry name" value="HELICASE_ATP_BIND_1"/>
    <property type="match status" value="1"/>
</dbReference>
<dbReference type="PROSITE" id="PS51194">
    <property type="entry name" value="HELICASE_CTER"/>
    <property type="match status" value="1"/>
</dbReference>
<dbReference type="PROSITE" id="PS50151">
    <property type="entry name" value="UVR"/>
    <property type="match status" value="1"/>
</dbReference>
<keyword id="KW-0067">ATP-binding</keyword>
<keyword id="KW-0963">Cytoplasm</keyword>
<keyword id="KW-0227">DNA damage</keyword>
<keyword id="KW-0228">DNA excision</keyword>
<keyword id="KW-0234">DNA repair</keyword>
<keyword id="KW-0267">Excision nuclease</keyword>
<keyword id="KW-0547">Nucleotide-binding</keyword>
<keyword id="KW-0742">SOS response</keyword>
<protein>
    <recommendedName>
        <fullName evidence="1">UvrABC system protein B</fullName>
        <shortName evidence="1">Protein UvrB</shortName>
    </recommendedName>
    <alternativeName>
        <fullName evidence="1">Excinuclease ABC subunit B</fullName>
    </alternativeName>
</protein>
<organism>
    <name type="scientific">Staphylococcus aureus (strain MRSA252)</name>
    <dbReference type="NCBI Taxonomy" id="282458"/>
    <lineage>
        <taxon>Bacteria</taxon>
        <taxon>Bacillati</taxon>
        <taxon>Bacillota</taxon>
        <taxon>Bacilli</taxon>
        <taxon>Bacillales</taxon>
        <taxon>Staphylococcaceae</taxon>
        <taxon>Staphylococcus</taxon>
    </lineage>
</organism>
<feature type="chain" id="PRO_0000138427" description="UvrABC system protein B">
    <location>
        <begin position="1"/>
        <end position="663"/>
    </location>
</feature>
<feature type="domain" description="Helicase ATP-binding" evidence="1">
    <location>
        <begin position="30"/>
        <end position="417"/>
    </location>
</feature>
<feature type="domain" description="Helicase C-terminal" evidence="1">
    <location>
        <begin position="434"/>
        <end position="600"/>
    </location>
</feature>
<feature type="domain" description="UVR" evidence="1">
    <location>
        <begin position="627"/>
        <end position="662"/>
    </location>
</feature>
<feature type="short sequence motif" description="Beta-hairpin">
    <location>
        <begin position="96"/>
        <end position="119"/>
    </location>
</feature>
<feature type="binding site" evidence="1">
    <location>
        <begin position="43"/>
        <end position="50"/>
    </location>
    <ligand>
        <name>ATP</name>
        <dbReference type="ChEBI" id="CHEBI:30616"/>
    </ligand>
</feature>
<proteinExistence type="inferred from homology"/>
<comment type="function">
    <text evidence="1">The UvrABC repair system catalyzes the recognition and processing of DNA lesions. A damage recognition complex composed of 2 UvrA and 2 UvrB subunits scans DNA for abnormalities. Upon binding of the UvrA(2)B(2) complex to a putative damaged site, the DNA wraps around one UvrB monomer. DNA wrap is dependent on ATP binding by UvrB and probably causes local melting of the DNA helix, facilitating insertion of UvrB beta-hairpin between the DNA strands. Then UvrB probes one DNA strand for the presence of a lesion. If a lesion is found the UvrA subunits dissociate and the UvrB-DNA preincision complex is formed. This complex is subsequently bound by UvrC and the second UvrB is released. If no lesion is found, the DNA wraps around the other UvrB subunit that will check the other stand for damage.</text>
</comment>
<comment type="subunit">
    <text evidence="1">Forms a heterotetramer with UvrA during the search for lesions. Interacts with UvrC in an incision complex.</text>
</comment>
<comment type="subcellular location">
    <subcellularLocation>
        <location evidence="1">Cytoplasm</location>
    </subcellularLocation>
</comment>
<comment type="domain">
    <text evidence="1">The beta-hairpin motif is involved in DNA binding.</text>
</comment>
<comment type="similarity">
    <text evidence="1">Belongs to the UvrB family.</text>
</comment>
<sequence length="663" mass="76881">MTMVEHYPFKIHSDFEPQGDQPQAIKEIVEGIKAGKRHQTLLGATGTGKTFTMSNVIKEVGKPTLIIAHNKTLAGQLYSEFKEFFPENRVEYFVSYYDYYQPEAYVPSTDTFIEKDASINDEIDQLRHSATSALFERDDVIIIASVSCIYGLGNPEEYKDLVVSVRVGMEMDRSELLRKLVDVQYTRNDIDFQRGTFRVRGDVVEIFPASKEELCIRVEFFGDEIDRIREVNYLTGEVLKEREHFAIFPASHFVTREEKLKVAIERIEKELEERLKELRDENKLLEAQRLEQRTNYDLEMMREMGFCSGIENYSVHLTLRPLGSTPYTLLDYFGDDWLVMIDESHVTLPQVRGMYNGDRARKQVLVDHGFRLPSALDNRPLKFEEFEEKTKQLVYVSATPGPYEIEHTDKMVEQIIRPTGLLDPKIEVRPTENQIDDLLSEIQTRVERNERVLVTTLTKKMSEDLTTYMKEAGIKVNYLHSEIKTLERIEIIRDLRMGTYDVIVGINLLREGIDIPEVSLVVILDADKEGFLRSNRSLIQTIGRAARNDKGEVIMYADKMTDSMKYAIDETQRRREIQMKHNEKHGITPKTINKKIHDLISATVENDENNDKAQTVIPKKMTKKERQKTIDNIEKEMKQAAKDLDFEKATELRDMLFELKAEG</sequence>
<evidence type="ECO:0000255" key="1">
    <source>
        <dbReference type="HAMAP-Rule" id="MF_00204"/>
    </source>
</evidence>
<gene>
    <name evidence="1" type="primary">uvrB</name>
    <name type="ordered locus">SAR0812</name>
</gene>
<reference key="1">
    <citation type="journal article" date="2004" name="Proc. Natl. Acad. Sci. U.S.A.">
        <title>Complete genomes of two clinical Staphylococcus aureus strains: evidence for the rapid evolution of virulence and drug resistance.</title>
        <authorList>
            <person name="Holden M.T.G."/>
            <person name="Feil E.J."/>
            <person name="Lindsay J.A."/>
            <person name="Peacock S.J."/>
            <person name="Day N.P.J."/>
            <person name="Enright M.C."/>
            <person name="Foster T.J."/>
            <person name="Moore C.E."/>
            <person name="Hurst L."/>
            <person name="Atkin R."/>
            <person name="Barron A."/>
            <person name="Bason N."/>
            <person name="Bentley S.D."/>
            <person name="Chillingworth C."/>
            <person name="Chillingworth T."/>
            <person name="Churcher C."/>
            <person name="Clark L."/>
            <person name="Corton C."/>
            <person name="Cronin A."/>
            <person name="Doggett J."/>
            <person name="Dowd L."/>
            <person name="Feltwell T."/>
            <person name="Hance Z."/>
            <person name="Harris B."/>
            <person name="Hauser H."/>
            <person name="Holroyd S."/>
            <person name="Jagels K."/>
            <person name="James K.D."/>
            <person name="Lennard N."/>
            <person name="Line A."/>
            <person name="Mayes R."/>
            <person name="Moule S."/>
            <person name="Mungall K."/>
            <person name="Ormond D."/>
            <person name="Quail M.A."/>
            <person name="Rabbinowitsch E."/>
            <person name="Rutherford K.M."/>
            <person name="Sanders M."/>
            <person name="Sharp S."/>
            <person name="Simmonds M."/>
            <person name="Stevens K."/>
            <person name="Whitehead S."/>
            <person name="Barrell B.G."/>
            <person name="Spratt B.G."/>
            <person name="Parkhill J."/>
        </authorList>
    </citation>
    <scope>NUCLEOTIDE SEQUENCE [LARGE SCALE GENOMIC DNA]</scope>
    <source>
        <strain>MRSA252</strain>
    </source>
</reference>
<name>UVRB_STAAR</name>